<sequence>MAATQATAARKFPEGLRVLAVDDSPVCLMLLEALLRRCKYQPTMTRDAATALRMLRERPGDFDLVISDVHMLDMDGFKLLELIGLEMDLPVIMQSANGELETMMKGVTHGACDYLVKPVSLKDIQNIWQHVWRKRKLDIRNHNGGYNDGGELVGATRTKRKYTRKMRNDGDNYGENKENMDSTLKRQRVVWTPELHRDFVIAVHELGVDRAVPRKILRMMKVDYMTRENIASHLQKYRLYLKRISTQTGMDPDQFPEKWKYMNELDALKNYCENGRYRLTPAIASSSSSNPFARMNSASALATNGFLPTHSVQLKNSQRNMAMGTVGHGGSPGNNPVFQPLQNSSNARKCFPSGPSGSSFANISNGLVLDTDDSGSSYAGMFCKSMWETSNGSPSCHSGNSSANKSNNGVSAPANQFQVQSKFGFSALANQFPVQSNCGFSAPANQYQVQSNGGFSVPANQFPVQSNGEFLAPTNQFPVQYPEVNNQPLVQMNQSSTNHFSTIGNDYQFPDLANCSKYWQPTAPSMFPDLGHNDGTSFRPSQANIANINQLSSFAASSGQEPMFGDELHGQMSPIMSTISLSDFDDQMGSFNIGNDTSPAEMMHDNFSLGSDSNISSSTPTDSSFGSTFPDFHLDSPEMPAQMLNGGDEDGILLPVLDDTVDQQDLFDQLDENNGREKLGSGRCVRKGPFECFF</sequence>
<gene>
    <name evidence="8" type="primary">RR25</name>
    <name evidence="7" type="synonym">ORR5</name>
    <name evidence="12" type="ordered locus">Os06g0647200</name>
    <name evidence="9" type="ordered locus">LOC_Os06g43910</name>
    <name evidence="11" type="ORF">OJ1226_A12.26</name>
    <name evidence="10" type="ORF">OSJNBa0062J02.10</name>
</gene>
<comment type="function">
    <text evidence="1">Transcriptional activator that binds specific DNA sequence. Functions as a response regulator involved in His-to-Asp phosphorelay signal transduction system. Phosphorylation of the Asp residue in the receiver domain activates the ability of the protein to promote the transcription of target genes. May directly activate some type-A response regulators in response to cytokinins.</text>
</comment>
<comment type="subcellular location">
    <subcellularLocation>
        <location evidence="3">Nucleus</location>
    </subcellularLocation>
</comment>
<comment type="PTM">
    <text evidence="9">Two-component system major event consists of a His-to-Asp phosphorelay between a sensor histidine kinase (HK) and a response regulator (RR). In plants, the His-to-Asp phosphorelay involves an additional intermediate named Histidine-containing phosphotransfer protein (HPt). This multistep phosphorelay consists of a His-Asp-His-Asp sequential transfer of a phosphate group between first a His and an Asp of the HK protein, followed by the transfer to a conserved His of the HPt protein and finally the transfer to an Asp in the receiver domain of the RR protein.</text>
</comment>
<comment type="disruption phenotype">
    <text evidence="5">Dwarf, chlorina, lesion mimic, abnormal shoot, low tillering and low fertility phenotypes.</text>
</comment>
<comment type="similarity">
    <text evidence="9">Belongs to the ARR family. Type-B subfamily.</text>
</comment>
<comment type="sequence caution" evidence="9">
    <conflict type="erroneous gene model prediction">
        <sequence resource="EMBL-CDS" id="BAF20118"/>
    </conflict>
</comment>
<comment type="sequence caution" evidence="9">
    <conflict type="erroneous gene model prediction">
        <sequence resource="EMBL-CDS" id="FAA00258"/>
    </conflict>
</comment>
<dbReference type="EMBL" id="BR000254">
    <property type="protein sequence ID" value="FAA00258.1"/>
    <property type="status" value="ALT_SEQ"/>
    <property type="molecule type" value="Genomic_DNA"/>
</dbReference>
<dbReference type="EMBL" id="AP003517">
    <property type="protein sequence ID" value="BAD37322.1"/>
    <property type="molecule type" value="Genomic_DNA"/>
</dbReference>
<dbReference type="EMBL" id="AP004008">
    <property type="protein sequence ID" value="BAD37619.1"/>
    <property type="molecule type" value="Genomic_DNA"/>
</dbReference>
<dbReference type="EMBL" id="AP008212">
    <property type="protein sequence ID" value="BAF20118.2"/>
    <property type="status" value="ALT_SEQ"/>
    <property type="molecule type" value="Genomic_DNA"/>
</dbReference>
<dbReference type="EMBL" id="AP014962">
    <property type="status" value="NOT_ANNOTATED_CDS"/>
    <property type="molecule type" value="Genomic_DNA"/>
</dbReference>
<dbReference type="SMR" id="Q67W50"/>
<dbReference type="FunCoup" id="Q67W50">
    <property type="interactions" value="8"/>
</dbReference>
<dbReference type="STRING" id="39947.Q67W50"/>
<dbReference type="PaxDb" id="39947-Q67W50"/>
<dbReference type="KEGG" id="dosa:Os06g0647200"/>
<dbReference type="eggNOG" id="KOG1601">
    <property type="taxonomic scope" value="Eukaryota"/>
</dbReference>
<dbReference type="InParanoid" id="Q67W50"/>
<dbReference type="OrthoDB" id="623710at2759"/>
<dbReference type="Proteomes" id="UP000000763">
    <property type="component" value="Chromosome 6"/>
</dbReference>
<dbReference type="Proteomes" id="UP000059680">
    <property type="component" value="Chromosome 6"/>
</dbReference>
<dbReference type="GO" id="GO:0005634">
    <property type="term" value="C:nucleus"/>
    <property type="evidence" value="ECO:0007669"/>
    <property type="project" value="UniProtKB-SubCell"/>
</dbReference>
<dbReference type="GO" id="GO:0003677">
    <property type="term" value="F:DNA binding"/>
    <property type="evidence" value="ECO:0007669"/>
    <property type="project" value="UniProtKB-KW"/>
</dbReference>
<dbReference type="GO" id="GO:0009736">
    <property type="term" value="P:cytokinin-activated signaling pathway"/>
    <property type="evidence" value="ECO:0007669"/>
    <property type="project" value="UniProtKB-KW"/>
</dbReference>
<dbReference type="GO" id="GO:0000160">
    <property type="term" value="P:phosphorelay signal transduction system"/>
    <property type="evidence" value="ECO:0007669"/>
    <property type="project" value="UniProtKB-KW"/>
</dbReference>
<dbReference type="CDD" id="cd17584">
    <property type="entry name" value="REC_typeB_ARR-like"/>
    <property type="match status" value="1"/>
</dbReference>
<dbReference type="FunFam" id="1.10.10.60:FF:000007">
    <property type="entry name" value="Two-component response regulator"/>
    <property type="match status" value="1"/>
</dbReference>
<dbReference type="Gene3D" id="3.40.50.2300">
    <property type="match status" value="1"/>
</dbReference>
<dbReference type="Gene3D" id="1.10.10.60">
    <property type="entry name" value="Homeodomain-like"/>
    <property type="match status" value="1"/>
</dbReference>
<dbReference type="InterPro" id="IPR045279">
    <property type="entry name" value="ARR-like"/>
</dbReference>
<dbReference type="InterPro" id="IPR011006">
    <property type="entry name" value="CheY-like_superfamily"/>
</dbReference>
<dbReference type="InterPro" id="IPR009057">
    <property type="entry name" value="Homeodomain-like_sf"/>
</dbReference>
<dbReference type="InterPro" id="IPR017930">
    <property type="entry name" value="Myb_dom"/>
</dbReference>
<dbReference type="InterPro" id="IPR006447">
    <property type="entry name" value="Myb_dom_plants"/>
</dbReference>
<dbReference type="InterPro" id="IPR001789">
    <property type="entry name" value="Sig_transdc_resp-reg_receiver"/>
</dbReference>
<dbReference type="NCBIfam" id="TIGR01557">
    <property type="entry name" value="myb_SHAQKYF"/>
    <property type="match status" value="1"/>
</dbReference>
<dbReference type="PANTHER" id="PTHR43874">
    <property type="entry name" value="TWO-COMPONENT RESPONSE REGULATOR"/>
    <property type="match status" value="1"/>
</dbReference>
<dbReference type="PANTHER" id="PTHR43874:SF7">
    <property type="entry name" value="TWO-COMPONENT RESPONSE REGULATOR ARR10"/>
    <property type="match status" value="1"/>
</dbReference>
<dbReference type="Pfam" id="PF00072">
    <property type="entry name" value="Response_reg"/>
    <property type="match status" value="1"/>
</dbReference>
<dbReference type="SMART" id="SM00448">
    <property type="entry name" value="REC"/>
    <property type="match status" value="1"/>
</dbReference>
<dbReference type="SUPFAM" id="SSF52172">
    <property type="entry name" value="CheY-like"/>
    <property type="match status" value="1"/>
</dbReference>
<dbReference type="SUPFAM" id="SSF46689">
    <property type="entry name" value="Homeodomain-like"/>
    <property type="match status" value="1"/>
</dbReference>
<dbReference type="PROSITE" id="PS51294">
    <property type="entry name" value="HTH_MYB"/>
    <property type="match status" value="1"/>
</dbReference>
<dbReference type="PROSITE" id="PS50110">
    <property type="entry name" value="RESPONSE_REGULATORY"/>
    <property type="match status" value="1"/>
</dbReference>
<keyword id="KW-0010">Activator</keyword>
<keyword id="KW-0932">Cytokinin signaling pathway</keyword>
<keyword id="KW-0238">DNA-binding</keyword>
<keyword id="KW-0539">Nucleus</keyword>
<keyword id="KW-0597">Phosphoprotein</keyword>
<keyword id="KW-1185">Reference proteome</keyword>
<keyword id="KW-0804">Transcription</keyword>
<keyword id="KW-0805">Transcription regulation</keyword>
<keyword id="KW-0902">Two-component regulatory system</keyword>
<reference key="1">
    <citation type="journal article" date="2006" name="Gene">
        <title>Identification and characterization of cytokinin-signalling gene families in rice.</title>
        <authorList>
            <person name="Ito Y."/>
            <person name="Kurata N."/>
        </authorList>
    </citation>
    <scope>NUCLEOTIDE SEQUENCE [GENOMIC DNA]</scope>
    <source>
        <strain>cv. Nipponbare</strain>
    </source>
</reference>
<reference key="2">
    <citation type="journal article" date="2005" name="Nature">
        <title>The map-based sequence of the rice genome.</title>
        <authorList>
            <consortium name="International rice genome sequencing project (IRGSP)"/>
        </authorList>
    </citation>
    <scope>NUCLEOTIDE SEQUENCE [LARGE SCALE GENOMIC DNA]</scope>
    <source>
        <strain>cv. Nipponbare</strain>
    </source>
</reference>
<reference key="3">
    <citation type="journal article" date="2008" name="Nucleic Acids Res.">
        <title>The rice annotation project database (RAP-DB): 2008 update.</title>
        <authorList>
            <consortium name="The rice annotation project (RAP)"/>
        </authorList>
    </citation>
    <scope>GENOME REANNOTATION</scope>
    <source>
        <strain>cv. Nipponbare</strain>
    </source>
</reference>
<reference key="4">
    <citation type="journal article" date="2013" name="Rice">
        <title>Improvement of the Oryza sativa Nipponbare reference genome using next generation sequence and optical map data.</title>
        <authorList>
            <person name="Kawahara Y."/>
            <person name="de la Bastide M."/>
            <person name="Hamilton J.P."/>
            <person name="Kanamori H."/>
            <person name="McCombie W.R."/>
            <person name="Ouyang S."/>
            <person name="Schwartz D.C."/>
            <person name="Tanaka T."/>
            <person name="Wu J."/>
            <person name="Zhou S."/>
            <person name="Childs K.L."/>
            <person name="Davidson R.M."/>
            <person name="Lin H."/>
            <person name="Quesada-Ocampo L."/>
            <person name="Vaillancourt B."/>
            <person name="Sakai H."/>
            <person name="Lee S.S."/>
            <person name="Kim J."/>
            <person name="Numa H."/>
            <person name="Itoh T."/>
            <person name="Buell C.R."/>
            <person name="Matsumoto T."/>
        </authorList>
    </citation>
    <scope>GENOME REANNOTATION</scope>
    <source>
        <strain>cv. Nipponbare</strain>
    </source>
</reference>
<reference key="5">
    <citation type="journal article" date="2006" name="Plant Physiol.">
        <title>Whole-genome analysis of Oryza sativa reveals similar architecture of two-component signaling machinery with Arabidopsis.</title>
        <authorList>
            <person name="Pareek A."/>
            <person name="Singh A."/>
            <person name="Kumar M."/>
            <person name="Kushwaha H.R."/>
            <person name="Lynn A.M."/>
            <person name="Singla-Pareek S.L."/>
        </authorList>
    </citation>
    <scope>DISRUPTION PHENOTYPE</scope>
</reference>
<reference key="6">
    <citation type="journal article" date="2007" name="Plant Physiol.">
        <title>Nomenclature for two-component signaling elements of rice.</title>
        <authorList>
            <person name="Schaller G.E."/>
            <person name="Doi K."/>
            <person name="Hwang I."/>
            <person name="Kieber J.J."/>
            <person name="Khurana J.P."/>
            <person name="Kurata N."/>
            <person name="Mizuno T."/>
            <person name="Pareek A."/>
            <person name="Shiu S.H."/>
            <person name="Wu P."/>
            <person name="Yip W.K."/>
        </authorList>
    </citation>
    <scope>GENE FAMILY</scope>
    <scope>NOMENCLATURE</scope>
</reference>
<proteinExistence type="inferred from homology"/>
<evidence type="ECO:0000250" key="1">
    <source>
        <dbReference type="UniProtKB" id="Q940D0"/>
    </source>
</evidence>
<evidence type="ECO:0000255" key="2">
    <source>
        <dbReference type="PROSITE-ProRule" id="PRU00169"/>
    </source>
</evidence>
<evidence type="ECO:0000255" key="3">
    <source>
        <dbReference type="PROSITE-ProRule" id="PRU00625"/>
    </source>
</evidence>
<evidence type="ECO:0000256" key="4">
    <source>
        <dbReference type="SAM" id="MobiDB-lite"/>
    </source>
</evidence>
<evidence type="ECO:0000269" key="5">
    <source>
    </source>
</evidence>
<evidence type="ECO:0000303" key="6">
    <source>
    </source>
</evidence>
<evidence type="ECO:0000303" key="7">
    <source>
    </source>
</evidence>
<evidence type="ECO:0000303" key="8">
    <source>
    </source>
</evidence>
<evidence type="ECO:0000305" key="9"/>
<evidence type="ECO:0000312" key="10">
    <source>
        <dbReference type="EMBL" id="BAD37322.1"/>
    </source>
</evidence>
<evidence type="ECO:0000312" key="11">
    <source>
        <dbReference type="EMBL" id="BAD37619.1"/>
    </source>
</evidence>
<evidence type="ECO:0000312" key="12">
    <source>
        <dbReference type="EMBL" id="BAF20118.2"/>
    </source>
</evidence>
<protein>
    <recommendedName>
        <fullName evidence="9">Two-component response regulator ORR25</fullName>
    </recommendedName>
    <alternativeName>
        <fullName evidence="6">OsRRB3</fullName>
    </alternativeName>
</protein>
<feature type="chain" id="PRO_0000433848" description="Two-component response regulator ORR25">
    <location>
        <begin position="1"/>
        <end position="694"/>
    </location>
</feature>
<feature type="domain" description="Response regulatory" evidence="2">
    <location>
        <begin position="17"/>
        <end position="132"/>
    </location>
</feature>
<feature type="domain" description="HTH myb-type" evidence="3">
    <location>
        <begin position="183"/>
        <end position="242"/>
    </location>
</feature>
<feature type="DNA-binding region" description="H-T-H motif" evidence="3">
    <location>
        <begin position="213"/>
        <end position="238"/>
    </location>
</feature>
<feature type="region of interest" description="Disordered" evidence="4">
    <location>
        <begin position="326"/>
        <end position="349"/>
    </location>
</feature>
<feature type="compositionally biased region" description="Polar residues" evidence="4">
    <location>
        <begin position="333"/>
        <end position="347"/>
    </location>
</feature>
<feature type="modified residue" description="4-aspartylphosphate" evidence="2">
    <location>
        <position position="68"/>
    </location>
</feature>
<accession>Q67W50</accession>
<accession>A1A6A6</accession>
<accession>Q0DAK5</accession>
<name>ORR25_ORYSJ</name>
<organism>
    <name type="scientific">Oryza sativa subsp. japonica</name>
    <name type="common">Rice</name>
    <dbReference type="NCBI Taxonomy" id="39947"/>
    <lineage>
        <taxon>Eukaryota</taxon>
        <taxon>Viridiplantae</taxon>
        <taxon>Streptophyta</taxon>
        <taxon>Embryophyta</taxon>
        <taxon>Tracheophyta</taxon>
        <taxon>Spermatophyta</taxon>
        <taxon>Magnoliopsida</taxon>
        <taxon>Liliopsida</taxon>
        <taxon>Poales</taxon>
        <taxon>Poaceae</taxon>
        <taxon>BOP clade</taxon>
        <taxon>Oryzoideae</taxon>
        <taxon>Oryzeae</taxon>
        <taxon>Oryzinae</taxon>
        <taxon>Oryza</taxon>
        <taxon>Oryza sativa</taxon>
    </lineage>
</organism>